<organism>
    <name type="scientific">Eremothecium gossypii (strain ATCC 10895 / CBS 109.51 / FGSC 9923 / NRRL Y-1056)</name>
    <name type="common">Yeast</name>
    <name type="synonym">Ashbya gossypii</name>
    <dbReference type="NCBI Taxonomy" id="284811"/>
    <lineage>
        <taxon>Eukaryota</taxon>
        <taxon>Fungi</taxon>
        <taxon>Dikarya</taxon>
        <taxon>Ascomycota</taxon>
        <taxon>Saccharomycotina</taxon>
        <taxon>Saccharomycetes</taxon>
        <taxon>Saccharomycetales</taxon>
        <taxon>Saccharomycetaceae</taxon>
        <taxon>Eremothecium</taxon>
    </lineage>
</organism>
<sequence length="1051" mass="117054">MSQQLQQAVEIAYSSTAEPALKKQALEYVQNVKAGAGAAEVFVGYLGDAGTSDVGRFVALQALSELAGEGGPARLAFLKDSAMRALRGETGGVWGAPEYVRNKTAEWVSRLFYAMYGEVNGNMWNSFFEDVAQATGVAGLRGSAAVEYNAAGLDAFLRVCAAINSEIGDQTFVRSKDAQVKNNSLKDAMRVQDVATLTSIWRHALEAMRQDVQRQDVAVLVLQCIGSFISWIDINLIVNSEYISTIYAYLNYPKTRIACAQCLCEILSKKMKPGDKLQLLGMLSLTDKVLQLGDVEVEVHEQLAKLTSSVGLELSVILEQCHDDSSSAGSCSIANSADHQIIHQVAPLVLKFMNHEYDSVTQQTFPFISHYLTFLKRLFALGGKPGSAVALNSKKLPLDDDHRQFLTSLIIVCMNKMKFDETCSYDDEDEVEEFVETVRSKLKVFQDNIAVINPAIYMENISKHIKSLLLGNSWRDLELAIYQMHNFAESIRNNLFGLNKSAISQSQPAQLMTTFMQDILDNSAIFQSSNPLIQISFFELIVRHYNFISHTGKNDISILSIFCTPFSMFNDSEKVRLRSWYLFSRLIKVTKPRLDDESLSQLLSKLAPLLAVKLLPNVANDSEIDTTFDNQLYIFEGVGILIGAKAKEEYSILDGVLSPLFADLESCIAAPVKSPEIVVQAHHILMAIGTIARGVHAGLVPENQLNNPQVNAALVHKSLIEKFSNIAEVILVTFSYFNKYETIRDATRFSFARLTPILKNDIIPFSSRLISIFLESDLKTIEMNDFLGFLGQMVHTFHADDNCYQLFNNLFTPVIKKVFDLVAQVEQEGSLASGANTAPAVSKVANGKNVVITDSFRDKVQLKKAYYSFLQSFVSNNVTSLLLTTANRNILPLILSDLLSYTPAEIHETSSMKLSLNVLINFVKFFGTGRCADFKDRNANTFEPLEGLSEFFITKVVPLVFEIPFKPEYEFNIDDGSCLVLAADLSRLLKALYDVNGDPANNASLKYLTEAYFPQVQFPQELSMEFIQTLATADEKAFEKYFVSFIKRMRS</sequence>
<comment type="function">
    <text evidence="1">tRNA nucleus export receptor which facilitates tRNA translocation across the nuclear pore complex. Involved in pre-tRNA splicing, probably by affecting the interaction of pre-tRNA with splicing endonuclease (By similarity).</text>
</comment>
<comment type="subcellular location">
    <subcellularLocation>
        <location evidence="1">Nucleus</location>
    </subcellularLocation>
    <subcellularLocation>
        <location evidence="1">Cytoplasm</location>
    </subcellularLocation>
    <text evidence="1">Shuttles between the nucleus and the cytoplasm.</text>
</comment>
<comment type="similarity">
    <text evidence="2">Belongs to the exportin family.</text>
</comment>
<keyword id="KW-0963">Cytoplasm</keyword>
<keyword id="KW-0539">Nucleus</keyword>
<keyword id="KW-1185">Reference proteome</keyword>
<keyword id="KW-0694">RNA-binding</keyword>
<keyword id="KW-0813">Transport</keyword>
<keyword id="KW-0819">tRNA processing</keyword>
<keyword id="KW-0820">tRNA-binding</keyword>
<gene>
    <name type="primary">LOS1</name>
    <name type="ordered locus">AFR424C</name>
</gene>
<reference key="1">
    <citation type="journal article" date="2004" name="Science">
        <title>The Ashbya gossypii genome as a tool for mapping the ancient Saccharomyces cerevisiae genome.</title>
        <authorList>
            <person name="Dietrich F.S."/>
            <person name="Voegeli S."/>
            <person name="Brachat S."/>
            <person name="Lerch A."/>
            <person name="Gates K."/>
            <person name="Steiner S."/>
            <person name="Mohr C."/>
            <person name="Poehlmann R."/>
            <person name="Luedi P."/>
            <person name="Choi S."/>
            <person name="Wing R.A."/>
            <person name="Flavier A."/>
            <person name="Gaffney T.D."/>
            <person name="Philippsen P."/>
        </authorList>
    </citation>
    <scope>NUCLEOTIDE SEQUENCE [LARGE SCALE GENOMIC DNA]</scope>
    <source>
        <strain>ATCC 10895 / CBS 109.51 / FGSC 9923 / NRRL Y-1056</strain>
    </source>
</reference>
<reference key="2">
    <citation type="journal article" date="2013" name="G3 (Bethesda)">
        <title>Genomes of Ashbya fungi isolated from insects reveal four mating-type loci, numerous translocations, lack of transposons, and distinct gene duplications.</title>
        <authorList>
            <person name="Dietrich F.S."/>
            <person name="Voegeli S."/>
            <person name="Kuo S."/>
            <person name="Philippsen P."/>
        </authorList>
    </citation>
    <scope>GENOME REANNOTATION</scope>
    <scope>SEQUENCE REVISION TO 284</scope>
    <source>
        <strain>ATCC 10895 / CBS 109.51 / FGSC 9923 / NRRL Y-1056</strain>
    </source>
</reference>
<protein>
    <recommendedName>
        <fullName>Exportin-T</fullName>
    </recommendedName>
    <alternativeName>
        <fullName>Exportin(tRNA)</fullName>
    </alternativeName>
    <alternativeName>
        <fullName>Karyopherin-beta</fullName>
    </alternativeName>
    <alternativeName>
        <fullName>tRNA exportin</fullName>
    </alternativeName>
</protein>
<dbReference type="EMBL" id="AE016819">
    <property type="protein sequence ID" value="AAS53795.2"/>
    <property type="molecule type" value="Genomic_DNA"/>
</dbReference>
<dbReference type="RefSeq" id="NP_985971.2">
    <property type="nucleotide sequence ID" value="NM_211326.2"/>
</dbReference>
<dbReference type="SMR" id="Q753A0"/>
<dbReference type="FunCoup" id="Q753A0">
    <property type="interactions" value="1112"/>
</dbReference>
<dbReference type="STRING" id="284811.Q753A0"/>
<dbReference type="EnsemblFungi" id="AAS53795">
    <property type="protein sequence ID" value="AAS53795"/>
    <property type="gene ID" value="AGOS_AFR424C"/>
</dbReference>
<dbReference type="GeneID" id="4622244"/>
<dbReference type="KEGG" id="ago:AGOS_AFR424C"/>
<dbReference type="eggNOG" id="KOG2021">
    <property type="taxonomic scope" value="Eukaryota"/>
</dbReference>
<dbReference type="HOGENOM" id="CLU_004414_0_1_1"/>
<dbReference type="InParanoid" id="Q753A0"/>
<dbReference type="OMA" id="HEMFLFG"/>
<dbReference type="OrthoDB" id="26399at2759"/>
<dbReference type="Proteomes" id="UP000000591">
    <property type="component" value="Chromosome VI"/>
</dbReference>
<dbReference type="GO" id="GO:0005737">
    <property type="term" value="C:cytoplasm"/>
    <property type="evidence" value="ECO:0000318"/>
    <property type="project" value="GO_Central"/>
</dbReference>
<dbReference type="GO" id="GO:0016363">
    <property type="term" value="C:nuclear matrix"/>
    <property type="evidence" value="ECO:0000318"/>
    <property type="project" value="GO_Central"/>
</dbReference>
<dbReference type="GO" id="GO:0005643">
    <property type="term" value="C:nuclear pore"/>
    <property type="evidence" value="ECO:0000318"/>
    <property type="project" value="GO_Central"/>
</dbReference>
<dbReference type="GO" id="GO:0031267">
    <property type="term" value="F:small GTPase binding"/>
    <property type="evidence" value="ECO:0007669"/>
    <property type="project" value="EnsemblFungi"/>
</dbReference>
<dbReference type="GO" id="GO:0000049">
    <property type="term" value="F:tRNA binding"/>
    <property type="evidence" value="ECO:0000318"/>
    <property type="project" value="GO_Central"/>
</dbReference>
<dbReference type="GO" id="GO:0008033">
    <property type="term" value="P:tRNA processing"/>
    <property type="evidence" value="ECO:0007669"/>
    <property type="project" value="UniProtKB-KW"/>
</dbReference>
<dbReference type="GO" id="GO:0071528">
    <property type="term" value="P:tRNA re-export from nucleus"/>
    <property type="evidence" value="ECO:0000318"/>
    <property type="project" value="GO_Central"/>
</dbReference>
<dbReference type="Gene3D" id="1.25.10.10">
    <property type="entry name" value="Leucine-rich Repeat Variant"/>
    <property type="match status" value="1"/>
</dbReference>
<dbReference type="InterPro" id="IPR011989">
    <property type="entry name" value="ARM-like"/>
</dbReference>
<dbReference type="InterPro" id="IPR016024">
    <property type="entry name" value="ARM-type_fold"/>
</dbReference>
<dbReference type="InterPro" id="IPR013598">
    <property type="entry name" value="Exportin-1/Importin-b-like"/>
</dbReference>
<dbReference type="InterPro" id="IPR045546">
    <property type="entry name" value="Exportin-T_C"/>
</dbReference>
<dbReference type="InterPro" id="IPR040017">
    <property type="entry name" value="XPOT"/>
</dbReference>
<dbReference type="PANTHER" id="PTHR15952:SF11">
    <property type="entry name" value="EXPORTIN-T"/>
    <property type="match status" value="1"/>
</dbReference>
<dbReference type="PANTHER" id="PTHR15952">
    <property type="entry name" value="EXPORTIN-T/LOS1"/>
    <property type="match status" value="1"/>
</dbReference>
<dbReference type="Pfam" id="PF19282">
    <property type="entry name" value="Exportin-T"/>
    <property type="match status" value="2"/>
</dbReference>
<dbReference type="Pfam" id="PF08389">
    <property type="entry name" value="Xpo1"/>
    <property type="match status" value="1"/>
</dbReference>
<dbReference type="SUPFAM" id="SSF48371">
    <property type="entry name" value="ARM repeat"/>
    <property type="match status" value="1"/>
</dbReference>
<name>XPOT_EREGS</name>
<evidence type="ECO:0000250" key="1"/>
<evidence type="ECO:0000305" key="2"/>
<feature type="chain" id="PRO_0000343078" description="Exportin-T">
    <location>
        <begin position="1"/>
        <end position="1051"/>
    </location>
</feature>
<proteinExistence type="inferred from homology"/>
<accession>Q753A0</accession>